<name>RDGC_SALPB</name>
<keyword id="KW-0963">Cytoplasm</keyword>
<keyword id="KW-0233">DNA recombination</keyword>
<proteinExistence type="inferred from homology"/>
<dbReference type="EMBL" id="CP000886">
    <property type="protein sequence ID" value="ABX68559.1"/>
    <property type="molecule type" value="Genomic_DNA"/>
</dbReference>
<dbReference type="RefSeq" id="WP_000964305.1">
    <property type="nucleotide sequence ID" value="NC_010102.1"/>
</dbReference>
<dbReference type="SMR" id="A9MX46"/>
<dbReference type="KEGG" id="spq:SPAB_03198"/>
<dbReference type="PATRIC" id="fig|1016998.12.peg.3018"/>
<dbReference type="HOGENOM" id="CLU_052038_1_1_6"/>
<dbReference type="BioCyc" id="SENT1016998:SPAB_RS13065-MONOMER"/>
<dbReference type="Proteomes" id="UP000008556">
    <property type="component" value="Chromosome"/>
</dbReference>
<dbReference type="GO" id="GO:0043590">
    <property type="term" value="C:bacterial nucleoid"/>
    <property type="evidence" value="ECO:0007669"/>
    <property type="project" value="TreeGrafter"/>
</dbReference>
<dbReference type="GO" id="GO:0005737">
    <property type="term" value="C:cytoplasm"/>
    <property type="evidence" value="ECO:0007669"/>
    <property type="project" value="UniProtKB-UniRule"/>
</dbReference>
<dbReference type="GO" id="GO:0003690">
    <property type="term" value="F:double-stranded DNA binding"/>
    <property type="evidence" value="ECO:0007669"/>
    <property type="project" value="TreeGrafter"/>
</dbReference>
<dbReference type="GO" id="GO:0006310">
    <property type="term" value="P:DNA recombination"/>
    <property type="evidence" value="ECO:0007669"/>
    <property type="project" value="UniProtKB-UniRule"/>
</dbReference>
<dbReference type="GO" id="GO:0000018">
    <property type="term" value="P:regulation of DNA recombination"/>
    <property type="evidence" value="ECO:0007669"/>
    <property type="project" value="TreeGrafter"/>
</dbReference>
<dbReference type="HAMAP" id="MF_00194">
    <property type="entry name" value="RdgC"/>
    <property type="match status" value="1"/>
</dbReference>
<dbReference type="InterPro" id="IPR007476">
    <property type="entry name" value="RdgC"/>
</dbReference>
<dbReference type="NCBIfam" id="NF001460">
    <property type="entry name" value="PRK00321.1-1"/>
    <property type="match status" value="1"/>
</dbReference>
<dbReference type="NCBIfam" id="NF001462">
    <property type="entry name" value="PRK00321.1-3"/>
    <property type="match status" value="1"/>
</dbReference>
<dbReference type="NCBIfam" id="NF001464">
    <property type="entry name" value="PRK00321.1-5"/>
    <property type="match status" value="1"/>
</dbReference>
<dbReference type="PANTHER" id="PTHR38103">
    <property type="entry name" value="RECOMBINATION-ASSOCIATED PROTEIN RDGC"/>
    <property type="match status" value="1"/>
</dbReference>
<dbReference type="PANTHER" id="PTHR38103:SF1">
    <property type="entry name" value="RECOMBINATION-ASSOCIATED PROTEIN RDGC"/>
    <property type="match status" value="1"/>
</dbReference>
<dbReference type="Pfam" id="PF04381">
    <property type="entry name" value="RdgC"/>
    <property type="match status" value="1"/>
</dbReference>
<accession>A9MX46</accession>
<comment type="function">
    <text evidence="1">May be involved in recombination.</text>
</comment>
<comment type="subcellular location">
    <subcellularLocation>
        <location evidence="1">Cytoplasm</location>
        <location evidence="1">Nucleoid</location>
    </subcellularLocation>
</comment>
<comment type="similarity">
    <text evidence="1">Belongs to the RdgC family.</text>
</comment>
<evidence type="ECO:0000255" key="1">
    <source>
        <dbReference type="HAMAP-Rule" id="MF_00194"/>
    </source>
</evidence>
<feature type="chain" id="PRO_1000077641" description="Recombination-associated protein RdgC">
    <location>
        <begin position="1"/>
        <end position="303"/>
    </location>
</feature>
<protein>
    <recommendedName>
        <fullName evidence="1">Recombination-associated protein RdgC</fullName>
    </recommendedName>
</protein>
<gene>
    <name evidence="1" type="primary">rdgC</name>
    <name type="ordered locus">SPAB_03198</name>
</gene>
<sequence>MLWFKNLMVYRLSRDITLRAEEMEKQLASMTFTPCGSQDMAKMGWVPPMGSHSDALTHTANGQIIICARKEEKILPSPVIKQALEAKIQKLEADQGRKLKKTEKDSLKDEVLHSLLPRAFSRFSQTMMWIDTVNGLIMVDCASAKKAEDTLALLRKSLGSLPVVPLALENPIELTLTEWVRSGTVAQGFQLLDEAELKAMLEDGGVIRAKKQDLVSDEIAVHIEAGKVVTKLALDWQQRIQFVMCDDGSIKRLKFCDELRDQNEDIDREDFAQRFDADFILMTGELAALIQSLVEGLGGEAQR</sequence>
<reference key="1">
    <citation type="submission" date="2007-11" db="EMBL/GenBank/DDBJ databases">
        <authorList>
            <consortium name="The Salmonella enterica serovar Paratyphi B Genome Sequencing Project"/>
            <person name="McClelland M."/>
            <person name="Sanderson E.K."/>
            <person name="Porwollik S."/>
            <person name="Spieth J."/>
            <person name="Clifton W.S."/>
            <person name="Fulton R."/>
            <person name="Cordes M."/>
            <person name="Wollam A."/>
            <person name="Shah N."/>
            <person name="Pepin K."/>
            <person name="Bhonagiri V."/>
            <person name="Nash W."/>
            <person name="Johnson M."/>
            <person name="Thiruvilangam P."/>
            <person name="Wilson R."/>
        </authorList>
    </citation>
    <scope>NUCLEOTIDE SEQUENCE [LARGE SCALE GENOMIC DNA]</scope>
    <source>
        <strain>ATCC BAA-1250 / SPB7</strain>
    </source>
</reference>
<organism>
    <name type="scientific">Salmonella paratyphi B (strain ATCC BAA-1250 / SPB7)</name>
    <dbReference type="NCBI Taxonomy" id="1016998"/>
    <lineage>
        <taxon>Bacteria</taxon>
        <taxon>Pseudomonadati</taxon>
        <taxon>Pseudomonadota</taxon>
        <taxon>Gammaproteobacteria</taxon>
        <taxon>Enterobacterales</taxon>
        <taxon>Enterobacteriaceae</taxon>
        <taxon>Salmonella</taxon>
    </lineage>
</organism>